<feature type="chain" id="PRO_1000025217" description="Co-chaperonin GroES">
    <location>
        <begin position="1"/>
        <end position="97"/>
    </location>
</feature>
<dbReference type="EMBL" id="BX248583">
    <property type="protein sequence ID" value="CAD83594.1"/>
    <property type="molecule type" value="Genomic_DNA"/>
</dbReference>
<dbReference type="SMR" id="Q7U349"/>
<dbReference type="STRING" id="203907.Bfl070"/>
<dbReference type="KEGG" id="bfl:Bfl070"/>
<dbReference type="eggNOG" id="COG0234">
    <property type="taxonomic scope" value="Bacteria"/>
</dbReference>
<dbReference type="HOGENOM" id="CLU_132825_1_1_6"/>
<dbReference type="OrthoDB" id="9806791at2"/>
<dbReference type="Proteomes" id="UP000002192">
    <property type="component" value="Chromosome"/>
</dbReference>
<dbReference type="GO" id="GO:0005737">
    <property type="term" value="C:cytoplasm"/>
    <property type="evidence" value="ECO:0007669"/>
    <property type="project" value="UniProtKB-SubCell"/>
</dbReference>
<dbReference type="GO" id="GO:0005524">
    <property type="term" value="F:ATP binding"/>
    <property type="evidence" value="ECO:0007669"/>
    <property type="project" value="InterPro"/>
</dbReference>
<dbReference type="GO" id="GO:0046872">
    <property type="term" value="F:metal ion binding"/>
    <property type="evidence" value="ECO:0007669"/>
    <property type="project" value="TreeGrafter"/>
</dbReference>
<dbReference type="GO" id="GO:0044183">
    <property type="term" value="F:protein folding chaperone"/>
    <property type="evidence" value="ECO:0007669"/>
    <property type="project" value="InterPro"/>
</dbReference>
<dbReference type="GO" id="GO:0051087">
    <property type="term" value="F:protein-folding chaperone binding"/>
    <property type="evidence" value="ECO:0007669"/>
    <property type="project" value="TreeGrafter"/>
</dbReference>
<dbReference type="GO" id="GO:0051082">
    <property type="term" value="F:unfolded protein binding"/>
    <property type="evidence" value="ECO:0007669"/>
    <property type="project" value="TreeGrafter"/>
</dbReference>
<dbReference type="GO" id="GO:0051085">
    <property type="term" value="P:chaperone cofactor-dependent protein refolding"/>
    <property type="evidence" value="ECO:0007669"/>
    <property type="project" value="TreeGrafter"/>
</dbReference>
<dbReference type="CDD" id="cd00320">
    <property type="entry name" value="cpn10"/>
    <property type="match status" value="1"/>
</dbReference>
<dbReference type="FunFam" id="2.30.33.40:FF:000001">
    <property type="entry name" value="10 kDa chaperonin"/>
    <property type="match status" value="1"/>
</dbReference>
<dbReference type="Gene3D" id="2.30.33.40">
    <property type="entry name" value="GroES chaperonin"/>
    <property type="match status" value="1"/>
</dbReference>
<dbReference type="HAMAP" id="MF_00580">
    <property type="entry name" value="CH10"/>
    <property type="match status" value="1"/>
</dbReference>
<dbReference type="InterPro" id="IPR020818">
    <property type="entry name" value="Chaperonin_GroES"/>
</dbReference>
<dbReference type="InterPro" id="IPR037124">
    <property type="entry name" value="Chaperonin_GroES_sf"/>
</dbReference>
<dbReference type="InterPro" id="IPR018369">
    <property type="entry name" value="Chaprnonin_Cpn10_CS"/>
</dbReference>
<dbReference type="InterPro" id="IPR011032">
    <property type="entry name" value="GroES-like_sf"/>
</dbReference>
<dbReference type="NCBIfam" id="NF001526">
    <property type="entry name" value="PRK00364.1-1"/>
    <property type="match status" value="1"/>
</dbReference>
<dbReference type="PANTHER" id="PTHR10772">
    <property type="entry name" value="10 KDA HEAT SHOCK PROTEIN"/>
    <property type="match status" value="1"/>
</dbReference>
<dbReference type="PANTHER" id="PTHR10772:SF58">
    <property type="entry name" value="CO-CHAPERONIN GROES"/>
    <property type="match status" value="1"/>
</dbReference>
<dbReference type="Pfam" id="PF00166">
    <property type="entry name" value="Cpn10"/>
    <property type="match status" value="1"/>
</dbReference>
<dbReference type="PRINTS" id="PR00297">
    <property type="entry name" value="CHAPERONIN10"/>
</dbReference>
<dbReference type="SMART" id="SM00883">
    <property type="entry name" value="Cpn10"/>
    <property type="match status" value="1"/>
</dbReference>
<dbReference type="SUPFAM" id="SSF50129">
    <property type="entry name" value="GroES-like"/>
    <property type="match status" value="1"/>
</dbReference>
<dbReference type="PROSITE" id="PS00681">
    <property type="entry name" value="CHAPERONINS_CPN10"/>
    <property type="match status" value="1"/>
</dbReference>
<organism>
    <name type="scientific">Blochmanniella floridana</name>
    <dbReference type="NCBI Taxonomy" id="203907"/>
    <lineage>
        <taxon>Bacteria</taxon>
        <taxon>Pseudomonadati</taxon>
        <taxon>Pseudomonadota</taxon>
        <taxon>Gammaproteobacteria</taxon>
        <taxon>Enterobacterales</taxon>
        <taxon>Enterobacteriaceae</taxon>
        <taxon>ant endosymbionts</taxon>
        <taxon>Candidatus Blochmanniella</taxon>
    </lineage>
</organism>
<proteinExistence type="inferred from homology"/>
<keyword id="KW-0143">Chaperone</keyword>
<keyword id="KW-0963">Cytoplasm</keyword>
<keyword id="KW-1185">Reference proteome</keyword>
<comment type="function">
    <text evidence="1">Together with the chaperonin GroEL, plays an essential role in assisting protein folding. The GroEL-GroES system forms a nano-cage that allows encapsulation of the non-native substrate proteins and provides a physical environment optimized to promote and accelerate protein folding. GroES binds to the apical surface of the GroEL ring, thereby capping the opening of the GroEL channel.</text>
</comment>
<comment type="subunit">
    <text evidence="1">Heptamer of 7 subunits arranged in a ring. Interacts with the chaperonin GroEL.</text>
</comment>
<comment type="subcellular location">
    <subcellularLocation>
        <location evidence="1">Cytoplasm</location>
    </subcellularLocation>
</comment>
<comment type="similarity">
    <text evidence="1">Belongs to the GroES chaperonin family.</text>
</comment>
<reference key="1">
    <citation type="journal article" date="2003" name="Proc. Natl. Acad. Sci. U.S.A.">
        <title>The genome sequence of Blochmannia floridanus: comparative analysis of reduced genomes.</title>
        <authorList>
            <person name="Gil R."/>
            <person name="Silva F.J."/>
            <person name="Zientz E."/>
            <person name="Delmotte F."/>
            <person name="Gonzalez-Candelas F."/>
            <person name="Latorre A."/>
            <person name="Rausell C."/>
            <person name="Kamerbeek J."/>
            <person name="Gadau J."/>
            <person name="Hoelldobler B."/>
            <person name="van Ham R.C.H.J."/>
            <person name="Gross R."/>
            <person name="Moya A."/>
        </authorList>
    </citation>
    <scope>NUCLEOTIDE SEQUENCE [LARGE SCALE GENOMIC DNA]</scope>
</reference>
<evidence type="ECO:0000255" key="1">
    <source>
        <dbReference type="HAMAP-Rule" id="MF_00580"/>
    </source>
</evidence>
<gene>
    <name evidence="1" type="primary">groES</name>
    <name evidence="1" type="synonym">groS</name>
    <name type="ordered locus">Bfl070</name>
</gene>
<sequence length="97" mass="10440">MKIRPLHDRVIVKRKEVESKSSGGIVLTGSAAGKSTRGEVLAVGHGRVLENGGIKALDVRVGDTIIFNDGYGVKVEKIDNEEVLIMSENDILAIVEK</sequence>
<protein>
    <recommendedName>
        <fullName evidence="1">Co-chaperonin GroES</fullName>
    </recommendedName>
    <alternativeName>
        <fullName evidence="1">10 kDa chaperonin</fullName>
    </alternativeName>
    <alternativeName>
        <fullName evidence="1">Chaperonin-10</fullName>
        <shortName evidence="1">Cpn10</shortName>
    </alternativeName>
</protein>
<accession>Q7U349</accession>
<name>CH10_BLOFL</name>